<name>Y4960_VIBVU</name>
<comment type="similarity">
    <text evidence="1">Belongs to the UPF0319 family.</text>
</comment>
<gene>
    <name type="ordered locus">VV2_0960</name>
</gene>
<organism>
    <name type="scientific">Vibrio vulnificus (strain CMCP6)</name>
    <dbReference type="NCBI Taxonomy" id="216895"/>
    <lineage>
        <taxon>Bacteria</taxon>
        <taxon>Pseudomonadati</taxon>
        <taxon>Pseudomonadota</taxon>
        <taxon>Gammaproteobacteria</taxon>
        <taxon>Vibrionales</taxon>
        <taxon>Vibrionaceae</taxon>
        <taxon>Vibrio</taxon>
    </lineage>
</organism>
<accession>Q8D5G0</accession>
<keyword id="KW-0732">Signal</keyword>
<proteinExistence type="inferred from homology"/>
<sequence>MNIIKPLTCILAMSISGLATAAVTLHVPDDVTLFVANGQKAKLSGSLFASSKTIELPNGENQIVFQYEPYFSQGNDRIGVESNVIIAKFSANDTDLNFELPKYRDHRVAEQEIKQMQWQLVDEQGAAVTKSEDKLVKSGMQIGRDYAREAADYNQTGGIAAIGTAVSVATIKTEPVANVETKVKAGDNTAEEMLHFWYDKADEATKARFKAYINQ</sequence>
<dbReference type="EMBL" id="AE016796">
    <property type="protein sequence ID" value="AAO07872.1"/>
    <property type="molecule type" value="Genomic_DNA"/>
</dbReference>
<dbReference type="RefSeq" id="WP_011081866.1">
    <property type="nucleotide sequence ID" value="NC_004460.2"/>
</dbReference>
<dbReference type="KEGG" id="vvu:VV2_0960"/>
<dbReference type="HOGENOM" id="CLU_073782_1_0_6"/>
<dbReference type="Proteomes" id="UP000002275">
    <property type="component" value="Chromosome 2"/>
</dbReference>
<dbReference type="HAMAP" id="MF_00789">
    <property type="entry name" value="UPF0319"/>
    <property type="match status" value="1"/>
</dbReference>
<dbReference type="InterPro" id="IPR018635">
    <property type="entry name" value="UPF0319"/>
</dbReference>
<dbReference type="NCBIfam" id="NF003383">
    <property type="entry name" value="PRK04517.1"/>
    <property type="match status" value="1"/>
</dbReference>
<dbReference type="PANTHER" id="PTHR38108">
    <property type="entry name" value="UPF0319 PROTEIN YCCT"/>
    <property type="match status" value="1"/>
</dbReference>
<dbReference type="PANTHER" id="PTHR38108:SF1">
    <property type="entry name" value="UPF0319 PROTEIN YCCT"/>
    <property type="match status" value="1"/>
</dbReference>
<dbReference type="Pfam" id="PF09829">
    <property type="entry name" value="DUF2057"/>
    <property type="match status" value="1"/>
</dbReference>
<feature type="signal peptide" evidence="1">
    <location>
        <begin position="1"/>
        <end position="21"/>
    </location>
</feature>
<feature type="chain" id="PRO_0000036313" description="UPF0319 protein VV2_0960">
    <location>
        <begin position="22"/>
        <end position="215"/>
    </location>
</feature>
<evidence type="ECO:0000255" key="1">
    <source>
        <dbReference type="HAMAP-Rule" id="MF_00789"/>
    </source>
</evidence>
<reference key="1">
    <citation type="submission" date="2002-12" db="EMBL/GenBank/DDBJ databases">
        <title>Complete genome sequence of Vibrio vulnificus CMCP6.</title>
        <authorList>
            <person name="Rhee J.H."/>
            <person name="Kim S.Y."/>
            <person name="Chung S.S."/>
            <person name="Kim J.J."/>
            <person name="Moon Y.H."/>
            <person name="Jeong H."/>
            <person name="Choy H.E."/>
        </authorList>
    </citation>
    <scope>NUCLEOTIDE SEQUENCE [LARGE SCALE GENOMIC DNA]</scope>
    <source>
        <strain>CMCP6</strain>
    </source>
</reference>
<protein>
    <recommendedName>
        <fullName evidence="1">UPF0319 protein VV2_0960</fullName>
    </recommendedName>
</protein>